<dbReference type="EC" id="2.4.2.10" evidence="1"/>
<dbReference type="EMBL" id="CP000155">
    <property type="protein sequence ID" value="ABC32986.1"/>
    <property type="molecule type" value="Genomic_DNA"/>
</dbReference>
<dbReference type="RefSeq" id="WP_011400040.1">
    <property type="nucleotide sequence ID" value="NC_007645.1"/>
</dbReference>
<dbReference type="SMR" id="Q2S8N8"/>
<dbReference type="STRING" id="349521.HCH_06340"/>
<dbReference type="KEGG" id="hch:HCH_06340"/>
<dbReference type="eggNOG" id="COG0461">
    <property type="taxonomic scope" value="Bacteria"/>
</dbReference>
<dbReference type="HOGENOM" id="CLU_074878_0_1_6"/>
<dbReference type="OrthoDB" id="9779060at2"/>
<dbReference type="UniPathway" id="UPA00070">
    <property type="reaction ID" value="UER00119"/>
</dbReference>
<dbReference type="Proteomes" id="UP000000238">
    <property type="component" value="Chromosome"/>
</dbReference>
<dbReference type="GO" id="GO:0005737">
    <property type="term" value="C:cytoplasm"/>
    <property type="evidence" value="ECO:0007669"/>
    <property type="project" value="TreeGrafter"/>
</dbReference>
<dbReference type="GO" id="GO:0000287">
    <property type="term" value="F:magnesium ion binding"/>
    <property type="evidence" value="ECO:0007669"/>
    <property type="project" value="UniProtKB-UniRule"/>
</dbReference>
<dbReference type="GO" id="GO:0004588">
    <property type="term" value="F:orotate phosphoribosyltransferase activity"/>
    <property type="evidence" value="ECO:0007669"/>
    <property type="project" value="UniProtKB-UniRule"/>
</dbReference>
<dbReference type="GO" id="GO:0006207">
    <property type="term" value="P:'de novo' pyrimidine nucleobase biosynthetic process"/>
    <property type="evidence" value="ECO:0007669"/>
    <property type="project" value="TreeGrafter"/>
</dbReference>
<dbReference type="GO" id="GO:0044205">
    <property type="term" value="P:'de novo' UMP biosynthetic process"/>
    <property type="evidence" value="ECO:0007669"/>
    <property type="project" value="UniProtKB-UniRule"/>
</dbReference>
<dbReference type="GO" id="GO:0046132">
    <property type="term" value="P:pyrimidine ribonucleoside biosynthetic process"/>
    <property type="evidence" value="ECO:0007669"/>
    <property type="project" value="TreeGrafter"/>
</dbReference>
<dbReference type="CDD" id="cd06223">
    <property type="entry name" value="PRTases_typeI"/>
    <property type="match status" value="1"/>
</dbReference>
<dbReference type="FunFam" id="3.40.50.2020:FF:000008">
    <property type="entry name" value="Orotate phosphoribosyltransferase"/>
    <property type="match status" value="1"/>
</dbReference>
<dbReference type="Gene3D" id="3.40.50.2020">
    <property type="match status" value="1"/>
</dbReference>
<dbReference type="HAMAP" id="MF_01208">
    <property type="entry name" value="PyrE"/>
    <property type="match status" value="1"/>
</dbReference>
<dbReference type="InterPro" id="IPR023031">
    <property type="entry name" value="OPRT"/>
</dbReference>
<dbReference type="InterPro" id="IPR004467">
    <property type="entry name" value="Or_phspho_trans_dom"/>
</dbReference>
<dbReference type="InterPro" id="IPR000836">
    <property type="entry name" value="PRibTrfase_dom"/>
</dbReference>
<dbReference type="InterPro" id="IPR029057">
    <property type="entry name" value="PRTase-like"/>
</dbReference>
<dbReference type="NCBIfam" id="TIGR00336">
    <property type="entry name" value="pyrE"/>
    <property type="match status" value="1"/>
</dbReference>
<dbReference type="PANTHER" id="PTHR46683">
    <property type="entry name" value="OROTATE PHOSPHORIBOSYLTRANSFERASE 1-RELATED"/>
    <property type="match status" value="1"/>
</dbReference>
<dbReference type="PANTHER" id="PTHR46683:SF1">
    <property type="entry name" value="OROTATE PHOSPHORIBOSYLTRANSFERASE 1-RELATED"/>
    <property type="match status" value="1"/>
</dbReference>
<dbReference type="Pfam" id="PF00156">
    <property type="entry name" value="Pribosyltran"/>
    <property type="match status" value="1"/>
</dbReference>
<dbReference type="SUPFAM" id="SSF53271">
    <property type="entry name" value="PRTase-like"/>
    <property type="match status" value="1"/>
</dbReference>
<dbReference type="PROSITE" id="PS00103">
    <property type="entry name" value="PUR_PYR_PR_TRANSFER"/>
    <property type="match status" value="1"/>
</dbReference>
<gene>
    <name evidence="1" type="primary">pyrE</name>
    <name type="ordered locus">HCH_06340</name>
</gene>
<accession>Q2S8N8</accession>
<sequence length="215" mass="23599">MHDYQKAFIEFAIQREVLKFGQFTLKSGRSSPYFFNAGLFNTSTTLAQIGHFYAAALTSSPLQYDMLFGPAYKGIPLVSALAVTLANEKSMDVPYAFNRKEAKAHGEGGVIVGAPLKGKVLIVDDVITAGTAIREVISIIKANGAEPAGVLIALDRQERGQHQLSAIQEIEQNYQIPVTAIIQLDQILEFLKSDPHFSDNYKQVAEYRAVYGVQS</sequence>
<feature type="chain" id="PRO_1000066236" description="Orotate phosphoribosyltransferase">
    <location>
        <begin position="1"/>
        <end position="215"/>
    </location>
</feature>
<feature type="binding site" description="in other chain" evidence="1">
    <location>
        <position position="26"/>
    </location>
    <ligand>
        <name>5-phospho-alpha-D-ribose 1-diphosphate</name>
        <dbReference type="ChEBI" id="CHEBI:58017"/>
        <note>ligand shared between dimeric partners</note>
    </ligand>
</feature>
<feature type="binding site" evidence="1">
    <location>
        <begin position="34"/>
        <end position="35"/>
    </location>
    <ligand>
        <name>orotate</name>
        <dbReference type="ChEBI" id="CHEBI:30839"/>
    </ligand>
</feature>
<feature type="binding site" description="in other chain" evidence="1">
    <location>
        <begin position="72"/>
        <end position="73"/>
    </location>
    <ligand>
        <name>5-phospho-alpha-D-ribose 1-diphosphate</name>
        <dbReference type="ChEBI" id="CHEBI:58017"/>
        <note>ligand shared between dimeric partners</note>
    </ligand>
</feature>
<feature type="binding site" evidence="1">
    <location>
        <position position="99"/>
    </location>
    <ligand>
        <name>5-phospho-alpha-D-ribose 1-diphosphate</name>
        <dbReference type="ChEBI" id="CHEBI:58017"/>
        <note>ligand shared between dimeric partners</note>
    </ligand>
</feature>
<feature type="binding site" description="in other chain" evidence="1">
    <location>
        <position position="100"/>
    </location>
    <ligand>
        <name>5-phospho-alpha-D-ribose 1-diphosphate</name>
        <dbReference type="ChEBI" id="CHEBI:58017"/>
        <note>ligand shared between dimeric partners</note>
    </ligand>
</feature>
<feature type="binding site" evidence="1">
    <location>
        <position position="103"/>
    </location>
    <ligand>
        <name>5-phospho-alpha-D-ribose 1-diphosphate</name>
        <dbReference type="ChEBI" id="CHEBI:58017"/>
        <note>ligand shared between dimeric partners</note>
    </ligand>
</feature>
<feature type="binding site" evidence="1">
    <location>
        <position position="105"/>
    </location>
    <ligand>
        <name>5-phospho-alpha-D-ribose 1-diphosphate</name>
        <dbReference type="ChEBI" id="CHEBI:58017"/>
        <note>ligand shared between dimeric partners</note>
    </ligand>
</feature>
<feature type="binding site" description="in other chain" evidence="1">
    <location>
        <begin position="124"/>
        <end position="132"/>
    </location>
    <ligand>
        <name>5-phospho-alpha-D-ribose 1-diphosphate</name>
        <dbReference type="ChEBI" id="CHEBI:58017"/>
        <note>ligand shared between dimeric partners</note>
    </ligand>
</feature>
<feature type="binding site" evidence="1">
    <location>
        <position position="128"/>
    </location>
    <ligand>
        <name>orotate</name>
        <dbReference type="ChEBI" id="CHEBI:30839"/>
    </ligand>
</feature>
<feature type="binding site" evidence="1">
    <location>
        <position position="156"/>
    </location>
    <ligand>
        <name>orotate</name>
        <dbReference type="ChEBI" id="CHEBI:30839"/>
    </ligand>
</feature>
<name>PYRE_HAHCH</name>
<reference key="1">
    <citation type="journal article" date="2005" name="Nucleic Acids Res.">
        <title>Genomic blueprint of Hahella chejuensis, a marine microbe producing an algicidal agent.</title>
        <authorList>
            <person name="Jeong H."/>
            <person name="Yim J.H."/>
            <person name="Lee C."/>
            <person name="Choi S.-H."/>
            <person name="Park Y.K."/>
            <person name="Yoon S.H."/>
            <person name="Hur C.-G."/>
            <person name="Kang H.-Y."/>
            <person name="Kim D."/>
            <person name="Lee H.H."/>
            <person name="Park K.H."/>
            <person name="Park S.-H."/>
            <person name="Park H.-S."/>
            <person name="Lee H.K."/>
            <person name="Oh T.K."/>
            <person name="Kim J.F."/>
        </authorList>
    </citation>
    <scope>NUCLEOTIDE SEQUENCE [LARGE SCALE GENOMIC DNA]</scope>
    <source>
        <strain>KCTC 2396</strain>
    </source>
</reference>
<comment type="function">
    <text evidence="1">Catalyzes the transfer of a ribosyl phosphate group from 5-phosphoribose 1-diphosphate to orotate, leading to the formation of orotidine monophosphate (OMP).</text>
</comment>
<comment type="catalytic activity">
    <reaction evidence="1">
        <text>orotidine 5'-phosphate + diphosphate = orotate + 5-phospho-alpha-D-ribose 1-diphosphate</text>
        <dbReference type="Rhea" id="RHEA:10380"/>
        <dbReference type="ChEBI" id="CHEBI:30839"/>
        <dbReference type="ChEBI" id="CHEBI:33019"/>
        <dbReference type="ChEBI" id="CHEBI:57538"/>
        <dbReference type="ChEBI" id="CHEBI:58017"/>
        <dbReference type="EC" id="2.4.2.10"/>
    </reaction>
</comment>
<comment type="cofactor">
    <cofactor evidence="1">
        <name>Mg(2+)</name>
        <dbReference type="ChEBI" id="CHEBI:18420"/>
    </cofactor>
</comment>
<comment type="pathway">
    <text evidence="1">Pyrimidine metabolism; UMP biosynthesis via de novo pathway; UMP from orotate: step 1/2.</text>
</comment>
<comment type="subunit">
    <text evidence="1">Homodimer.</text>
</comment>
<comment type="similarity">
    <text evidence="1">Belongs to the purine/pyrimidine phosphoribosyltransferase family. PyrE subfamily.</text>
</comment>
<keyword id="KW-0328">Glycosyltransferase</keyword>
<keyword id="KW-0460">Magnesium</keyword>
<keyword id="KW-0665">Pyrimidine biosynthesis</keyword>
<keyword id="KW-1185">Reference proteome</keyword>
<keyword id="KW-0808">Transferase</keyword>
<evidence type="ECO:0000255" key="1">
    <source>
        <dbReference type="HAMAP-Rule" id="MF_01208"/>
    </source>
</evidence>
<proteinExistence type="inferred from homology"/>
<organism>
    <name type="scientific">Hahella chejuensis (strain KCTC 2396)</name>
    <dbReference type="NCBI Taxonomy" id="349521"/>
    <lineage>
        <taxon>Bacteria</taxon>
        <taxon>Pseudomonadati</taxon>
        <taxon>Pseudomonadota</taxon>
        <taxon>Gammaproteobacteria</taxon>
        <taxon>Oceanospirillales</taxon>
        <taxon>Hahellaceae</taxon>
        <taxon>Hahella</taxon>
    </lineage>
</organism>
<protein>
    <recommendedName>
        <fullName evidence="1">Orotate phosphoribosyltransferase</fullName>
        <shortName evidence="1">OPRT</shortName>
        <shortName evidence="1">OPRTase</shortName>
        <ecNumber evidence="1">2.4.2.10</ecNumber>
    </recommendedName>
</protein>